<organism>
    <name type="scientific">Streptococcus suis (strain 98HAH33)</name>
    <dbReference type="NCBI Taxonomy" id="391296"/>
    <lineage>
        <taxon>Bacteria</taxon>
        <taxon>Bacillati</taxon>
        <taxon>Bacillota</taxon>
        <taxon>Bacilli</taxon>
        <taxon>Lactobacillales</taxon>
        <taxon>Streptococcaceae</taxon>
        <taxon>Streptococcus</taxon>
    </lineage>
</organism>
<accession>A4W2M2</accession>
<proteinExistence type="inferred from homology"/>
<name>DEOD_STRS2</name>
<evidence type="ECO:0000250" key="1">
    <source>
        <dbReference type="UniProtKB" id="P50389"/>
    </source>
</evidence>
<evidence type="ECO:0000255" key="2">
    <source>
        <dbReference type="HAMAP-Rule" id="MF_01627"/>
    </source>
</evidence>
<protein>
    <recommendedName>
        <fullName evidence="2">Purine nucleoside phosphorylase DeoD-type</fullName>
        <shortName evidence="2">PNP</shortName>
        <ecNumber evidence="2">2.4.2.1</ecNumber>
    </recommendedName>
</protein>
<dbReference type="EC" id="2.4.2.1" evidence="2"/>
<dbReference type="EMBL" id="CP000408">
    <property type="protein sequence ID" value="ABP92611.1"/>
    <property type="molecule type" value="Genomic_DNA"/>
</dbReference>
<dbReference type="SMR" id="A4W2M2"/>
<dbReference type="KEGG" id="ssv:SSU98_1453"/>
<dbReference type="HOGENOM" id="CLU_068457_2_0_9"/>
<dbReference type="GO" id="GO:0005829">
    <property type="term" value="C:cytosol"/>
    <property type="evidence" value="ECO:0007669"/>
    <property type="project" value="TreeGrafter"/>
</dbReference>
<dbReference type="GO" id="GO:0004731">
    <property type="term" value="F:purine-nucleoside phosphorylase activity"/>
    <property type="evidence" value="ECO:0007669"/>
    <property type="project" value="UniProtKB-UniRule"/>
</dbReference>
<dbReference type="GO" id="GO:0006152">
    <property type="term" value="P:purine nucleoside catabolic process"/>
    <property type="evidence" value="ECO:0007669"/>
    <property type="project" value="TreeGrafter"/>
</dbReference>
<dbReference type="CDD" id="cd09006">
    <property type="entry name" value="PNP_EcPNPI-like"/>
    <property type="match status" value="1"/>
</dbReference>
<dbReference type="Gene3D" id="3.40.50.1580">
    <property type="entry name" value="Nucleoside phosphorylase domain"/>
    <property type="match status" value="1"/>
</dbReference>
<dbReference type="HAMAP" id="MF_01627">
    <property type="entry name" value="Pur_nucleosid_phosp"/>
    <property type="match status" value="1"/>
</dbReference>
<dbReference type="InterPro" id="IPR004402">
    <property type="entry name" value="DeoD-type"/>
</dbReference>
<dbReference type="InterPro" id="IPR018016">
    <property type="entry name" value="Nucleoside_phosphorylase_CS"/>
</dbReference>
<dbReference type="InterPro" id="IPR000845">
    <property type="entry name" value="Nucleoside_phosphorylase_d"/>
</dbReference>
<dbReference type="InterPro" id="IPR035994">
    <property type="entry name" value="Nucleoside_phosphorylase_sf"/>
</dbReference>
<dbReference type="NCBIfam" id="TIGR00107">
    <property type="entry name" value="deoD"/>
    <property type="match status" value="1"/>
</dbReference>
<dbReference type="NCBIfam" id="NF004489">
    <property type="entry name" value="PRK05819.1"/>
    <property type="match status" value="1"/>
</dbReference>
<dbReference type="PANTHER" id="PTHR43691:SF11">
    <property type="entry name" value="FI09636P-RELATED"/>
    <property type="match status" value="1"/>
</dbReference>
<dbReference type="PANTHER" id="PTHR43691">
    <property type="entry name" value="URIDINE PHOSPHORYLASE"/>
    <property type="match status" value="1"/>
</dbReference>
<dbReference type="Pfam" id="PF01048">
    <property type="entry name" value="PNP_UDP_1"/>
    <property type="match status" value="1"/>
</dbReference>
<dbReference type="SUPFAM" id="SSF53167">
    <property type="entry name" value="Purine and uridine phosphorylases"/>
    <property type="match status" value="1"/>
</dbReference>
<dbReference type="PROSITE" id="PS01232">
    <property type="entry name" value="PNP_UDP_1"/>
    <property type="match status" value="1"/>
</dbReference>
<comment type="function">
    <text evidence="2">Catalyzes the reversible phosphorolytic breakdown of the N-glycosidic bond in the beta-(deoxy)ribonucleoside molecules, with the formation of the corresponding free purine bases and pentose-1-phosphate.</text>
</comment>
<comment type="catalytic activity">
    <reaction evidence="2">
        <text>a purine D-ribonucleoside + phosphate = a purine nucleobase + alpha-D-ribose 1-phosphate</text>
        <dbReference type="Rhea" id="RHEA:19805"/>
        <dbReference type="ChEBI" id="CHEBI:26386"/>
        <dbReference type="ChEBI" id="CHEBI:43474"/>
        <dbReference type="ChEBI" id="CHEBI:57720"/>
        <dbReference type="ChEBI" id="CHEBI:142355"/>
        <dbReference type="EC" id="2.4.2.1"/>
    </reaction>
</comment>
<comment type="catalytic activity">
    <reaction evidence="2">
        <text>a purine 2'-deoxy-D-ribonucleoside + phosphate = a purine nucleobase + 2-deoxy-alpha-D-ribose 1-phosphate</text>
        <dbReference type="Rhea" id="RHEA:36431"/>
        <dbReference type="ChEBI" id="CHEBI:26386"/>
        <dbReference type="ChEBI" id="CHEBI:43474"/>
        <dbReference type="ChEBI" id="CHEBI:57259"/>
        <dbReference type="ChEBI" id="CHEBI:142361"/>
        <dbReference type="EC" id="2.4.2.1"/>
    </reaction>
</comment>
<comment type="subunit">
    <text evidence="2">Homohexamer; trimer of homodimers.</text>
</comment>
<comment type="similarity">
    <text evidence="2">Belongs to the PNP/UDP phosphorylase family.</text>
</comment>
<gene>
    <name evidence="2" type="primary">deoD</name>
    <name type="ordered locus">SSU98_1453</name>
</gene>
<reference key="1">
    <citation type="journal article" date="2007" name="PLoS ONE">
        <title>A glimpse of streptococcal toxic shock syndrome from comparative genomics of S. suis 2 Chinese isolates.</title>
        <authorList>
            <person name="Chen C."/>
            <person name="Tang J."/>
            <person name="Dong W."/>
            <person name="Wang C."/>
            <person name="Feng Y."/>
            <person name="Wang J."/>
            <person name="Zheng F."/>
            <person name="Pan X."/>
            <person name="Liu D."/>
            <person name="Li M."/>
            <person name="Song Y."/>
            <person name="Zhu X."/>
            <person name="Sun H."/>
            <person name="Feng T."/>
            <person name="Guo Z."/>
            <person name="Ju A."/>
            <person name="Ge J."/>
            <person name="Dong Y."/>
            <person name="Sun W."/>
            <person name="Jiang Y."/>
            <person name="Wang J."/>
            <person name="Yan J."/>
            <person name="Yang H."/>
            <person name="Wang X."/>
            <person name="Gao G.F."/>
            <person name="Yang R."/>
            <person name="Wang J."/>
            <person name="Yu J."/>
        </authorList>
    </citation>
    <scope>NUCLEOTIDE SEQUENCE [LARGE SCALE GENOMIC DNA]</scope>
    <source>
        <strain>98HAH33</strain>
    </source>
</reference>
<feature type="chain" id="PRO_1000186234" description="Purine nucleoside phosphorylase DeoD-type">
    <location>
        <begin position="1"/>
        <end position="237"/>
    </location>
</feature>
<feature type="active site" description="Proton donor" evidence="2">
    <location>
        <position position="205"/>
    </location>
</feature>
<feature type="binding site" evidence="1">
    <location>
        <position position="4"/>
    </location>
    <ligand>
        <name>a purine D-ribonucleoside</name>
        <dbReference type="ChEBI" id="CHEBI:142355"/>
        <note>ligand shared between dimeric partners</note>
    </ligand>
</feature>
<feature type="binding site" description="in other chain" evidence="1">
    <location>
        <position position="20"/>
    </location>
    <ligand>
        <name>phosphate</name>
        <dbReference type="ChEBI" id="CHEBI:43474"/>
        <note>ligand shared between dimeric partners</note>
    </ligand>
</feature>
<feature type="binding site" description="in other chain" evidence="1">
    <location>
        <position position="24"/>
    </location>
    <ligand>
        <name>phosphate</name>
        <dbReference type="ChEBI" id="CHEBI:43474"/>
        <note>ligand shared between dimeric partners</note>
    </ligand>
</feature>
<feature type="binding site" evidence="1">
    <location>
        <position position="43"/>
    </location>
    <ligand>
        <name>phosphate</name>
        <dbReference type="ChEBI" id="CHEBI:43474"/>
        <note>ligand shared between dimeric partners</note>
    </ligand>
</feature>
<feature type="binding site" description="in other chain" evidence="1">
    <location>
        <begin position="87"/>
        <end position="90"/>
    </location>
    <ligand>
        <name>phosphate</name>
        <dbReference type="ChEBI" id="CHEBI:43474"/>
        <note>ligand shared between dimeric partners</note>
    </ligand>
</feature>
<feature type="binding site" description="in other chain" evidence="1">
    <location>
        <begin position="180"/>
        <end position="182"/>
    </location>
    <ligand>
        <name>a purine D-ribonucleoside</name>
        <dbReference type="ChEBI" id="CHEBI:142355"/>
        <note>ligand shared between dimeric partners</note>
    </ligand>
</feature>
<feature type="binding site" description="in other chain" evidence="1">
    <location>
        <begin position="204"/>
        <end position="205"/>
    </location>
    <ligand>
        <name>a purine D-ribonucleoside</name>
        <dbReference type="ChEBI" id="CHEBI:142355"/>
        <note>ligand shared between dimeric partners</note>
    </ligand>
</feature>
<feature type="site" description="Important for catalytic activity" evidence="2">
    <location>
        <position position="219"/>
    </location>
</feature>
<sequence>MSIHISAKPGEIADKILLPGDPLRAKFIAENFLEDAVCFNEVRNMFGYTGTYKGHRVSVMGTGMGIPSISIYAHELINEYGVKKLIRVGTAGSLNEDVHVRELVLAQAAATNSRMINIDWPEYDLPQIADFDLLDKAYHIAKELNMTTHVGNVLSSDSFYSPKLFSRNLELGQLGVKAVEMEAAALYYLGAKFGVQTLAIMTISDSLVNPEEDTTAEERQNTFTDMMKVGLETLIAE</sequence>
<keyword id="KW-0328">Glycosyltransferase</keyword>
<keyword id="KW-0808">Transferase</keyword>